<gene>
    <name evidence="1" type="primary">deoB</name>
    <name type="ordered locus">BLi02500</name>
    <name type="ordered locus">BL00772</name>
</gene>
<proteinExistence type="inferred from homology"/>
<evidence type="ECO:0000255" key="1">
    <source>
        <dbReference type="HAMAP-Rule" id="MF_00740"/>
    </source>
</evidence>
<comment type="function">
    <text evidence="1">Isomerase that catalyzes the conversion of deoxy-ribose 1-phosphate (dRib-1-P) and ribose 1-phosphate (Rib-1-P) to deoxy-ribose 5-phosphate (dRib-5-P) and ribose 5-phosphate (Rib-5-P), respectively.</text>
</comment>
<comment type="catalytic activity">
    <reaction evidence="1">
        <text>2-deoxy-alpha-D-ribose 1-phosphate = 2-deoxy-D-ribose 5-phosphate</text>
        <dbReference type="Rhea" id="RHEA:27658"/>
        <dbReference type="ChEBI" id="CHEBI:57259"/>
        <dbReference type="ChEBI" id="CHEBI:62877"/>
        <dbReference type="EC" id="5.4.2.7"/>
    </reaction>
</comment>
<comment type="catalytic activity">
    <reaction evidence="1">
        <text>alpha-D-ribose 1-phosphate = D-ribose 5-phosphate</text>
        <dbReference type="Rhea" id="RHEA:18793"/>
        <dbReference type="ChEBI" id="CHEBI:57720"/>
        <dbReference type="ChEBI" id="CHEBI:78346"/>
        <dbReference type="EC" id="5.4.2.7"/>
    </reaction>
</comment>
<comment type="cofactor">
    <cofactor evidence="1">
        <name>Mn(2+)</name>
        <dbReference type="ChEBI" id="CHEBI:29035"/>
    </cofactor>
    <text evidence="1">Binds 2 manganese ions.</text>
</comment>
<comment type="pathway">
    <text evidence="1">Carbohydrate degradation; 2-deoxy-D-ribose 1-phosphate degradation; D-glyceraldehyde 3-phosphate and acetaldehyde from 2-deoxy-alpha-D-ribose 1-phosphate: step 1/2.</text>
</comment>
<comment type="subcellular location">
    <subcellularLocation>
        <location evidence="1">Cytoplasm</location>
    </subcellularLocation>
</comment>
<comment type="similarity">
    <text evidence="1">Belongs to the phosphopentomutase family.</text>
</comment>
<organism>
    <name type="scientific">Bacillus licheniformis (strain ATCC 14580 / DSM 13 / JCM 2505 / CCUG 7422 / NBRC 12200 / NCIMB 9375 / NCTC 10341 / NRRL NRS-1264 / Gibson 46)</name>
    <dbReference type="NCBI Taxonomy" id="279010"/>
    <lineage>
        <taxon>Bacteria</taxon>
        <taxon>Bacillati</taxon>
        <taxon>Bacillota</taxon>
        <taxon>Bacilli</taxon>
        <taxon>Bacillales</taxon>
        <taxon>Bacillaceae</taxon>
        <taxon>Bacillus</taxon>
    </lineage>
</organism>
<protein>
    <recommendedName>
        <fullName evidence="1">Phosphopentomutase</fullName>
        <ecNumber evidence="1">5.4.2.7</ecNumber>
    </recommendedName>
    <alternativeName>
        <fullName evidence="1">Phosphodeoxyribomutase</fullName>
    </alternativeName>
</protein>
<dbReference type="EC" id="5.4.2.7" evidence="1"/>
<dbReference type="EMBL" id="AE017333">
    <property type="protein sequence ID" value="AAU41375.1"/>
    <property type="molecule type" value="Genomic_DNA"/>
</dbReference>
<dbReference type="EMBL" id="CP000002">
    <property type="protein sequence ID" value="AAU24020.1"/>
    <property type="molecule type" value="Genomic_DNA"/>
</dbReference>
<dbReference type="RefSeq" id="WP_003183173.1">
    <property type="nucleotide sequence ID" value="NC_006322.1"/>
</dbReference>
<dbReference type="SMR" id="Q65HT9"/>
<dbReference type="STRING" id="279010.BL00772"/>
<dbReference type="GeneID" id="92860906"/>
<dbReference type="KEGG" id="bld:BLi02500"/>
<dbReference type="KEGG" id="bli:BL00772"/>
<dbReference type="eggNOG" id="COG1015">
    <property type="taxonomic scope" value="Bacteria"/>
</dbReference>
<dbReference type="HOGENOM" id="CLU_053861_0_0_9"/>
<dbReference type="UniPathway" id="UPA00002">
    <property type="reaction ID" value="UER00467"/>
</dbReference>
<dbReference type="Proteomes" id="UP000000606">
    <property type="component" value="Chromosome"/>
</dbReference>
<dbReference type="GO" id="GO:0005829">
    <property type="term" value="C:cytosol"/>
    <property type="evidence" value="ECO:0007669"/>
    <property type="project" value="TreeGrafter"/>
</dbReference>
<dbReference type="GO" id="GO:0000287">
    <property type="term" value="F:magnesium ion binding"/>
    <property type="evidence" value="ECO:0007669"/>
    <property type="project" value="InterPro"/>
</dbReference>
<dbReference type="GO" id="GO:0030145">
    <property type="term" value="F:manganese ion binding"/>
    <property type="evidence" value="ECO:0007669"/>
    <property type="project" value="UniProtKB-UniRule"/>
</dbReference>
<dbReference type="GO" id="GO:0008973">
    <property type="term" value="F:phosphopentomutase activity"/>
    <property type="evidence" value="ECO:0007669"/>
    <property type="project" value="UniProtKB-UniRule"/>
</dbReference>
<dbReference type="GO" id="GO:0006018">
    <property type="term" value="P:2-deoxyribose 1-phosphate catabolic process"/>
    <property type="evidence" value="ECO:0007669"/>
    <property type="project" value="UniProtKB-UniRule"/>
</dbReference>
<dbReference type="GO" id="GO:0006015">
    <property type="term" value="P:5-phosphoribose 1-diphosphate biosynthetic process"/>
    <property type="evidence" value="ECO:0007669"/>
    <property type="project" value="UniProtKB-UniPathway"/>
</dbReference>
<dbReference type="GO" id="GO:0043094">
    <property type="term" value="P:metabolic compound salvage"/>
    <property type="evidence" value="ECO:0007669"/>
    <property type="project" value="InterPro"/>
</dbReference>
<dbReference type="GO" id="GO:0009117">
    <property type="term" value="P:nucleotide metabolic process"/>
    <property type="evidence" value="ECO:0007669"/>
    <property type="project" value="InterPro"/>
</dbReference>
<dbReference type="CDD" id="cd16009">
    <property type="entry name" value="PPM"/>
    <property type="match status" value="1"/>
</dbReference>
<dbReference type="FunFam" id="3.30.70.1250:FF:000001">
    <property type="entry name" value="Phosphopentomutase"/>
    <property type="match status" value="1"/>
</dbReference>
<dbReference type="Gene3D" id="3.40.720.10">
    <property type="entry name" value="Alkaline Phosphatase, subunit A"/>
    <property type="match status" value="1"/>
</dbReference>
<dbReference type="Gene3D" id="3.30.70.1250">
    <property type="entry name" value="Phosphopentomutase"/>
    <property type="match status" value="1"/>
</dbReference>
<dbReference type="HAMAP" id="MF_00740">
    <property type="entry name" value="Phosphopentomut"/>
    <property type="match status" value="1"/>
</dbReference>
<dbReference type="InterPro" id="IPR017850">
    <property type="entry name" value="Alkaline_phosphatase_core_sf"/>
</dbReference>
<dbReference type="InterPro" id="IPR010045">
    <property type="entry name" value="DeoB"/>
</dbReference>
<dbReference type="InterPro" id="IPR006124">
    <property type="entry name" value="Metalloenzyme"/>
</dbReference>
<dbReference type="InterPro" id="IPR024052">
    <property type="entry name" value="Phosphopentomutase_DeoB_cap_sf"/>
</dbReference>
<dbReference type="NCBIfam" id="TIGR01696">
    <property type="entry name" value="deoB"/>
    <property type="match status" value="1"/>
</dbReference>
<dbReference type="NCBIfam" id="NF003766">
    <property type="entry name" value="PRK05362.1"/>
    <property type="match status" value="1"/>
</dbReference>
<dbReference type="PANTHER" id="PTHR21110">
    <property type="entry name" value="PHOSPHOPENTOMUTASE"/>
    <property type="match status" value="1"/>
</dbReference>
<dbReference type="PANTHER" id="PTHR21110:SF0">
    <property type="entry name" value="PHOSPHOPENTOMUTASE"/>
    <property type="match status" value="1"/>
</dbReference>
<dbReference type="Pfam" id="PF01676">
    <property type="entry name" value="Metalloenzyme"/>
    <property type="match status" value="1"/>
</dbReference>
<dbReference type="PIRSF" id="PIRSF001491">
    <property type="entry name" value="Ppentomutase"/>
    <property type="match status" value="1"/>
</dbReference>
<dbReference type="SUPFAM" id="SSF53649">
    <property type="entry name" value="Alkaline phosphatase-like"/>
    <property type="match status" value="1"/>
</dbReference>
<dbReference type="SUPFAM" id="SSF143856">
    <property type="entry name" value="DeoB insert domain-like"/>
    <property type="match status" value="1"/>
</dbReference>
<accession>Q65HT9</accession>
<accession>Q62T89</accession>
<name>DEOB_BACLD</name>
<reference key="1">
    <citation type="journal article" date="2004" name="J. Mol. Microbiol. Biotechnol.">
        <title>The complete genome sequence of Bacillus licheniformis DSM13, an organism with great industrial potential.</title>
        <authorList>
            <person name="Veith B."/>
            <person name="Herzberg C."/>
            <person name="Steckel S."/>
            <person name="Feesche J."/>
            <person name="Maurer K.H."/>
            <person name="Ehrenreich P."/>
            <person name="Baeumer S."/>
            <person name="Henne A."/>
            <person name="Liesegang H."/>
            <person name="Merkl R."/>
            <person name="Ehrenreich A."/>
            <person name="Gottschalk G."/>
        </authorList>
    </citation>
    <scope>NUCLEOTIDE SEQUENCE [LARGE SCALE GENOMIC DNA]</scope>
    <source>
        <strain>ATCC 14580 / DSM 13 / JCM 2505 / CCUG 7422 / NBRC 12200 / NCIMB 9375 / NCTC 10341 / NRRL NRS-1264 / Gibson 46</strain>
    </source>
</reference>
<reference key="2">
    <citation type="journal article" date="2004" name="Genome Biol.">
        <title>Complete genome sequence of the industrial bacterium Bacillus licheniformis and comparisons with closely related Bacillus species.</title>
        <authorList>
            <person name="Rey M.W."/>
            <person name="Ramaiya P."/>
            <person name="Nelson B.A."/>
            <person name="Brody-Karpin S.D."/>
            <person name="Zaretsky E.J."/>
            <person name="Tang M."/>
            <person name="Lopez de Leon A."/>
            <person name="Xiang H."/>
            <person name="Gusti V."/>
            <person name="Clausen I.G."/>
            <person name="Olsen P.B."/>
            <person name="Rasmussen M.D."/>
            <person name="Andersen J.T."/>
            <person name="Joergensen P.L."/>
            <person name="Larsen T.S."/>
            <person name="Sorokin A."/>
            <person name="Bolotin A."/>
            <person name="Lapidus A."/>
            <person name="Galleron N."/>
            <person name="Ehrlich S.D."/>
            <person name="Berka R.M."/>
        </authorList>
    </citation>
    <scope>NUCLEOTIDE SEQUENCE [LARGE SCALE GENOMIC DNA]</scope>
    <source>
        <strain>ATCC 14580 / DSM 13 / JCM 2505 / CCUG 7422 / NBRC 12200 / NCIMB 9375 / NCTC 10341 / NRRL NRS-1264 / Gibson 46</strain>
    </source>
</reference>
<feature type="chain" id="PRO_0000258274" description="Phosphopentomutase">
    <location>
        <begin position="1"/>
        <end position="394"/>
    </location>
</feature>
<feature type="binding site" evidence="1">
    <location>
        <position position="15"/>
    </location>
    <ligand>
        <name>Mn(2+)</name>
        <dbReference type="ChEBI" id="CHEBI:29035"/>
        <label>1</label>
    </ligand>
</feature>
<feature type="binding site" evidence="1">
    <location>
        <position position="288"/>
    </location>
    <ligand>
        <name>Mn(2+)</name>
        <dbReference type="ChEBI" id="CHEBI:29035"/>
        <label>2</label>
    </ligand>
</feature>
<feature type="binding site" evidence="1">
    <location>
        <position position="293"/>
    </location>
    <ligand>
        <name>Mn(2+)</name>
        <dbReference type="ChEBI" id="CHEBI:29035"/>
        <label>2</label>
    </ligand>
</feature>
<feature type="binding site" evidence="1">
    <location>
        <position position="329"/>
    </location>
    <ligand>
        <name>Mn(2+)</name>
        <dbReference type="ChEBI" id="CHEBI:29035"/>
        <label>1</label>
    </ligand>
</feature>
<feature type="binding site" evidence="1">
    <location>
        <position position="330"/>
    </location>
    <ligand>
        <name>Mn(2+)</name>
        <dbReference type="ChEBI" id="CHEBI:29035"/>
        <label>1</label>
    </ligand>
</feature>
<feature type="binding site" evidence="1">
    <location>
        <position position="341"/>
    </location>
    <ligand>
        <name>Mn(2+)</name>
        <dbReference type="ChEBI" id="CHEBI:29035"/>
        <label>2</label>
    </ligand>
</feature>
<sequence>MPAFDYNRVFLIVMDSVGIGEAPDAEKFNDKGADTLGHIAEHMGGISLPNMAKLGLSNIREIKGVEKAEKPLAYYGKMKEASNGKDTMTGHWEIMGLYIDKPFRVFPEGFPDELIHELEQKSGRKVIGNKPASGTAILDELGAEHMETGALIVYTSADSVLQIAAHEEVVPLEELYKICEIARELTLDEKYMVGRVIARPFVGKPGEFKRTPNRHDYALKPFDRTVMNELKDDSFDVIAIGKISDIYDGEGITESLRTKSNMDGMDKLVQTLDKGFTGISFVNLVDFDALFGHRRDPEGYGKALEEFDARLPEVFEKMREDDLLIITADHGNDPVHHGTDHTREYVPLLVYSKKHEKPGALPLADTFADIGATIADNFKTNMPKYGKSFLSLLK</sequence>
<keyword id="KW-0963">Cytoplasm</keyword>
<keyword id="KW-0413">Isomerase</keyword>
<keyword id="KW-0464">Manganese</keyword>
<keyword id="KW-0479">Metal-binding</keyword>
<keyword id="KW-1185">Reference proteome</keyword>